<dbReference type="EMBL" id="AP009351">
    <property type="protein sequence ID" value="BAF66733.1"/>
    <property type="molecule type" value="Genomic_DNA"/>
</dbReference>
<dbReference type="RefSeq" id="WP_000868999.1">
    <property type="nucleotide sequence ID" value="NZ_JBBIAE010000016.1"/>
</dbReference>
<dbReference type="SMR" id="A6QEF1"/>
<dbReference type="KEGG" id="sae:NWMN_0461"/>
<dbReference type="HOGENOM" id="CLU_103669_2_1_9"/>
<dbReference type="Proteomes" id="UP000006386">
    <property type="component" value="Chromosome"/>
</dbReference>
<dbReference type="GO" id="GO:0000917">
    <property type="term" value="P:division septum assembly"/>
    <property type="evidence" value="ECO:0007669"/>
    <property type="project" value="UniProtKB-KW"/>
</dbReference>
<dbReference type="GO" id="GO:0030435">
    <property type="term" value="P:sporulation resulting in formation of a cellular spore"/>
    <property type="evidence" value="ECO:0007669"/>
    <property type="project" value="InterPro"/>
</dbReference>
<dbReference type="Gene3D" id="3.30.1120.40">
    <property type="entry name" value="Stage V sporulation protein G"/>
    <property type="match status" value="1"/>
</dbReference>
<dbReference type="HAMAP" id="MF_00819">
    <property type="entry name" value="SpoVG"/>
    <property type="match status" value="1"/>
</dbReference>
<dbReference type="InterPro" id="IPR007170">
    <property type="entry name" value="SpoVG"/>
</dbReference>
<dbReference type="InterPro" id="IPR036751">
    <property type="entry name" value="SpoVG_sf"/>
</dbReference>
<dbReference type="NCBIfam" id="NF009749">
    <property type="entry name" value="PRK13259.1"/>
    <property type="match status" value="1"/>
</dbReference>
<dbReference type="PANTHER" id="PTHR38429">
    <property type="entry name" value="SEPTATION PROTEIN SPOVG-RELATED"/>
    <property type="match status" value="1"/>
</dbReference>
<dbReference type="PANTHER" id="PTHR38429:SF1">
    <property type="entry name" value="SEPTATION PROTEIN SPOVG-RELATED"/>
    <property type="match status" value="1"/>
</dbReference>
<dbReference type="Pfam" id="PF04026">
    <property type="entry name" value="SpoVG"/>
    <property type="match status" value="1"/>
</dbReference>
<dbReference type="SUPFAM" id="SSF160537">
    <property type="entry name" value="SpoVG-like"/>
    <property type="match status" value="1"/>
</dbReference>
<name>SP5G_STAAE</name>
<reference key="1">
    <citation type="journal article" date="2008" name="J. Bacteriol.">
        <title>Genome sequence of Staphylococcus aureus strain Newman and comparative analysis of staphylococcal genomes: polymorphism and evolution of two major pathogenicity islands.</title>
        <authorList>
            <person name="Baba T."/>
            <person name="Bae T."/>
            <person name="Schneewind O."/>
            <person name="Takeuchi F."/>
            <person name="Hiramatsu K."/>
        </authorList>
    </citation>
    <scope>NUCLEOTIDE SEQUENCE [LARGE SCALE GENOMIC DNA]</scope>
    <source>
        <strain>Newman</strain>
    </source>
</reference>
<proteinExistence type="inferred from homology"/>
<gene>
    <name evidence="1" type="primary">spoVG</name>
    <name type="ordered locus">NWMN_0461</name>
</gene>
<sequence>MKVTDVRLRKIQTDGRMKALVSITLDEAFVIHDLRVIEGNSGLFVAMPSKRTPDGEFRDIAHPINSDMRQEIQDAVMKVYDETDEVVPDKNATSEDSEEA</sequence>
<accession>A6QEF1</accession>
<feature type="chain" id="PRO_1000072873" description="Putative septation protein SpoVG">
    <location>
        <begin position="1"/>
        <end position="100"/>
    </location>
</feature>
<protein>
    <recommendedName>
        <fullName evidence="1">Putative septation protein SpoVG</fullName>
    </recommendedName>
</protein>
<evidence type="ECO:0000255" key="1">
    <source>
        <dbReference type="HAMAP-Rule" id="MF_00819"/>
    </source>
</evidence>
<organism>
    <name type="scientific">Staphylococcus aureus (strain Newman)</name>
    <dbReference type="NCBI Taxonomy" id="426430"/>
    <lineage>
        <taxon>Bacteria</taxon>
        <taxon>Bacillati</taxon>
        <taxon>Bacillota</taxon>
        <taxon>Bacilli</taxon>
        <taxon>Bacillales</taxon>
        <taxon>Staphylococcaceae</taxon>
        <taxon>Staphylococcus</taxon>
    </lineage>
</organism>
<comment type="function">
    <text evidence="1">Could be involved in septation.</text>
</comment>
<comment type="similarity">
    <text evidence="1">Belongs to the SpoVG family.</text>
</comment>
<keyword id="KW-0131">Cell cycle</keyword>
<keyword id="KW-0132">Cell division</keyword>
<keyword id="KW-0717">Septation</keyword>